<sequence>MGRAFEYRKATKLKRWGNMARTFTRIGKQIAIAVKAGGPDPENNPHLRAVVATAKRENMPKDNVERAIKNAMGKDQKDYKEMNYEGYGPFGIAVFVETATDNTTRTVANVRSVFNKFGGTLGTSGSLDFMFSWKSMFTITKKEGVDMDDLILELIDYGVEEEYDEDEDEITLYGDPKSFAQIQKYLEENGFEVKGAEFTRIPNDEKDLTPEQRATIDKMVERLEEDEDVQNVYTNMKPADNEGEE</sequence>
<gene>
    <name type="ordered locus">BF2564</name>
</gene>
<proteinExistence type="inferred from homology"/>
<reference key="1">
    <citation type="journal article" date="2004" name="Proc. Natl. Acad. Sci. U.S.A.">
        <title>Genomic analysis of Bacteroides fragilis reveals extensive DNA inversions regulating cell surface adaptation.</title>
        <authorList>
            <person name="Kuwahara T."/>
            <person name="Yamashita A."/>
            <person name="Hirakawa H."/>
            <person name="Nakayama H."/>
            <person name="Toh H."/>
            <person name="Okada N."/>
            <person name="Kuhara S."/>
            <person name="Hattori M."/>
            <person name="Hayashi T."/>
            <person name="Ohnishi Y."/>
        </authorList>
    </citation>
    <scope>NUCLEOTIDE SEQUENCE [LARGE SCALE GENOMIC DNA]</scope>
    <source>
        <strain>YCH46</strain>
    </source>
</reference>
<name>Y2564_BACFR</name>
<feature type="chain" id="PRO_0000175756" description="Probable transcriptional regulatory protein BF2564">
    <location>
        <begin position="1"/>
        <end position="245"/>
    </location>
</feature>
<feature type="region of interest" description="Disordered" evidence="2">
    <location>
        <begin position="225"/>
        <end position="245"/>
    </location>
</feature>
<organism>
    <name type="scientific">Bacteroides fragilis (strain YCH46)</name>
    <dbReference type="NCBI Taxonomy" id="295405"/>
    <lineage>
        <taxon>Bacteria</taxon>
        <taxon>Pseudomonadati</taxon>
        <taxon>Bacteroidota</taxon>
        <taxon>Bacteroidia</taxon>
        <taxon>Bacteroidales</taxon>
        <taxon>Bacteroidaceae</taxon>
        <taxon>Bacteroides</taxon>
    </lineage>
</organism>
<protein>
    <recommendedName>
        <fullName evidence="1">Probable transcriptional regulatory protein BF2564</fullName>
    </recommendedName>
</protein>
<keyword id="KW-0963">Cytoplasm</keyword>
<keyword id="KW-0238">DNA-binding</keyword>
<keyword id="KW-0804">Transcription</keyword>
<keyword id="KW-0805">Transcription regulation</keyword>
<comment type="subcellular location">
    <subcellularLocation>
        <location evidence="1">Cytoplasm</location>
    </subcellularLocation>
</comment>
<comment type="similarity">
    <text evidence="1">Belongs to the TACO1 family.</text>
</comment>
<accession>Q64T66</accession>
<evidence type="ECO:0000255" key="1">
    <source>
        <dbReference type="HAMAP-Rule" id="MF_00693"/>
    </source>
</evidence>
<evidence type="ECO:0000256" key="2">
    <source>
        <dbReference type="SAM" id="MobiDB-lite"/>
    </source>
</evidence>
<dbReference type="EMBL" id="AP006841">
    <property type="protein sequence ID" value="BAD49313.1"/>
    <property type="molecule type" value="Genomic_DNA"/>
</dbReference>
<dbReference type="RefSeq" id="WP_008768977.1">
    <property type="nucleotide sequence ID" value="NZ_UYXF01000003.1"/>
</dbReference>
<dbReference type="RefSeq" id="YP_099847.1">
    <property type="nucleotide sequence ID" value="NC_006347.1"/>
</dbReference>
<dbReference type="SMR" id="Q64T66"/>
<dbReference type="STRING" id="295405.BF2564"/>
<dbReference type="KEGG" id="bfr:BF2564"/>
<dbReference type="PATRIC" id="fig|295405.11.peg.2473"/>
<dbReference type="HOGENOM" id="CLU_062974_3_0_10"/>
<dbReference type="OrthoDB" id="9781053at2"/>
<dbReference type="Proteomes" id="UP000002197">
    <property type="component" value="Chromosome"/>
</dbReference>
<dbReference type="GO" id="GO:0005829">
    <property type="term" value="C:cytosol"/>
    <property type="evidence" value="ECO:0007669"/>
    <property type="project" value="TreeGrafter"/>
</dbReference>
<dbReference type="GO" id="GO:0003677">
    <property type="term" value="F:DNA binding"/>
    <property type="evidence" value="ECO:0007669"/>
    <property type="project" value="UniProtKB-UniRule"/>
</dbReference>
<dbReference type="GO" id="GO:0006355">
    <property type="term" value="P:regulation of DNA-templated transcription"/>
    <property type="evidence" value="ECO:0007669"/>
    <property type="project" value="UniProtKB-UniRule"/>
</dbReference>
<dbReference type="FunFam" id="1.10.10.200:FF:000004">
    <property type="entry name" value="Probable transcriptional regulatory protein BSBG_02618"/>
    <property type="match status" value="1"/>
</dbReference>
<dbReference type="Gene3D" id="1.10.10.200">
    <property type="match status" value="1"/>
</dbReference>
<dbReference type="Gene3D" id="3.30.70.980">
    <property type="match status" value="2"/>
</dbReference>
<dbReference type="HAMAP" id="MF_00693">
    <property type="entry name" value="Transcrip_reg_TACO1"/>
    <property type="match status" value="1"/>
</dbReference>
<dbReference type="InterPro" id="IPR017856">
    <property type="entry name" value="Integrase-like_N"/>
</dbReference>
<dbReference type="InterPro" id="IPR048300">
    <property type="entry name" value="TACO1_YebC-like_2nd/3rd_dom"/>
</dbReference>
<dbReference type="InterPro" id="IPR049083">
    <property type="entry name" value="TACO1_YebC_N"/>
</dbReference>
<dbReference type="InterPro" id="IPR002876">
    <property type="entry name" value="Transcrip_reg_TACO1-like"/>
</dbReference>
<dbReference type="InterPro" id="IPR026564">
    <property type="entry name" value="Transcrip_reg_TACO1-like_dom3"/>
</dbReference>
<dbReference type="InterPro" id="IPR029072">
    <property type="entry name" value="YebC-like"/>
</dbReference>
<dbReference type="NCBIfam" id="NF009044">
    <property type="entry name" value="PRK12378.1"/>
    <property type="match status" value="1"/>
</dbReference>
<dbReference type="NCBIfam" id="TIGR01033">
    <property type="entry name" value="YebC/PmpR family DNA-binding transcriptional regulator"/>
    <property type="match status" value="1"/>
</dbReference>
<dbReference type="PANTHER" id="PTHR12532:SF6">
    <property type="entry name" value="TRANSCRIPTIONAL REGULATORY PROTEIN YEBC-RELATED"/>
    <property type="match status" value="1"/>
</dbReference>
<dbReference type="PANTHER" id="PTHR12532">
    <property type="entry name" value="TRANSLATIONAL ACTIVATOR OF CYTOCHROME C OXIDASE 1"/>
    <property type="match status" value="1"/>
</dbReference>
<dbReference type="Pfam" id="PF20772">
    <property type="entry name" value="TACO1_YebC_N"/>
    <property type="match status" value="1"/>
</dbReference>
<dbReference type="Pfam" id="PF01709">
    <property type="entry name" value="Transcrip_reg"/>
    <property type="match status" value="1"/>
</dbReference>
<dbReference type="SUPFAM" id="SSF75625">
    <property type="entry name" value="YebC-like"/>
    <property type="match status" value="1"/>
</dbReference>